<evidence type="ECO:0000255" key="1">
    <source>
        <dbReference type="HAMAP-Rule" id="MF_00229"/>
    </source>
</evidence>
<keyword id="KW-0963">Cytoplasm</keyword>
<keyword id="KW-0369">Histidine metabolism</keyword>
<keyword id="KW-0456">Lyase</keyword>
<keyword id="KW-1185">Reference proteome</keyword>
<comment type="catalytic activity">
    <reaction evidence="1">
        <text>L-histidine = trans-urocanate + NH4(+)</text>
        <dbReference type="Rhea" id="RHEA:21232"/>
        <dbReference type="ChEBI" id="CHEBI:17771"/>
        <dbReference type="ChEBI" id="CHEBI:28938"/>
        <dbReference type="ChEBI" id="CHEBI:57595"/>
        <dbReference type="EC" id="4.3.1.3"/>
    </reaction>
</comment>
<comment type="pathway">
    <text evidence="1">Amino-acid degradation; L-histidine degradation into L-glutamate; N-formimidoyl-L-glutamate from L-histidine: step 1/3.</text>
</comment>
<comment type="subcellular location">
    <subcellularLocation>
        <location evidence="1">Cytoplasm</location>
    </subcellularLocation>
</comment>
<comment type="PTM">
    <text evidence="1">Contains an active site 4-methylidene-imidazol-5-one (MIO), which is formed autocatalytically by cyclization and dehydration of residues Ala-Ser-Gly.</text>
</comment>
<comment type="similarity">
    <text evidence="1">Belongs to the PAL/histidase family.</text>
</comment>
<proteinExistence type="inferred from homology"/>
<organism>
    <name type="scientific">Maricaulis maris (strain MCS10)</name>
    <name type="common">Caulobacter maris</name>
    <dbReference type="NCBI Taxonomy" id="394221"/>
    <lineage>
        <taxon>Bacteria</taxon>
        <taxon>Pseudomonadati</taxon>
        <taxon>Pseudomonadota</taxon>
        <taxon>Alphaproteobacteria</taxon>
        <taxon>Maricaulales</taxon>
        <taxon>Maricaulaceae</taxon>
        <taxon>Maricaulis</taxon>
    </lineage>
</organism>
<sequence>MTTVTIKPGAMVLADWADIWRGATIRIDPEAKAGVDAAAATVDRLIASGEAVYGLNTGFGKLAQTRIADDELATLQERLVLSHAAGIGEALDSRIVRLVMALKLASLGRGASGVRWTTIAAMQALLDADVLPVIPSQGSVGASGDLAPLAHMSAALIGAGEATWQGQRMPASDALAKAGLKPVQLGPKEGLALLNGTQTSTALALAGLFEVEAGFQAALVSGALSVDAAKGSVAPFDPRIHSLRGHPGQIDVAAALRGLLDGSGILSSHEGCEKIQDPYCLRCQPQVMGAVLDLLRQAGAVLEREANAVTDNPLIFTDTDEAISGGNFHAEPVAFAADQIAMAACEIGSICERRIALLTDPAVSGLPAFLTPNPGINSGFMIAHVTAAALVSENKQKAYPASVDSIPTSANQEDHVSMATHGAFRLLKMAENLHVVVGIELLCGAQGTDFHAGLTSSPTLETAKATLRKQVPAYGDDRYFATDIANARDLVTGRGLVADAGTLPGIA</sequence>
<protein>
    <recommendedName>
        <fullName evidence="1">Histidine ammonia-lyase</fullName>
        <shortName evidence="1">Histidase</shortName>
        <ecNumber evidence="1">4.3.1.3</ecNumber>
    </recommendedName>
</protein>
<accession>Q0AP92</accession>
<name>HUTH_MARMM</name>
<dbReference type="EC" id="4.3.1.3" evidence="1"/>
<dbReference type="EMBL" id="CP000449">
    <property type="protein sequence ID" value="ABI65895.1"/>
    <property type="molecule type" value="Genomic_DNA"/>
</dbReference>
<dbReference type="RefSeq" id="WP_011643542.1">
    <property type="nucleotide sequence ID" value="NC_008347.1"/>
</dbReference>
<dbReference type="SMR" id="Q0AP92"/>
<dbReference type="STRING" id="394221.Mmar10_1603"/>
<dbReference type="KEGG" id="mmr:Mmar10_1603"/>
<dbReference type="eggNOG" id="COG2986">
    <property type="taxonomic scope" value="Bacteria"/>
</dbReference>
<dbReference type="HOGENOM" id="CLU_014801_4_0_5"/>
<dbReference type="UniPathway" id="UPA00379">
    <property type="reaction ID" value="UER00549"/>
</dbReference>
<dbReference type="Proteomes" id="UP000001964">
    <property type="component" value="Chromosome"/>
</dbReference>
<dbReference type="GO" id="GO:0005737">
    <property type="term" value="C:cytoplasm"/>
    <property type="evidence" value="ECO:0007669"/>
    <property type="project" value="UniProtKB-SubCell"/>
</dbReference>
<dbReference type="GO" id="GO:0004397">
    <property type="term" value="F:histidine ammonia-lyase activity"/>
    <property type="evidence" value="ECO:0007669"/>
    <property type="project" value="UniProtKB-UniRule"/>
</dbReference>
<dbReference type="GO" id="GO:0019556">
    <property type="term" value="P:L-histidine catabolic process to glutamate and formamide"/>
    <property type="evidence" value="ECO:0007669"/>
    <property type="project" value="UniProtKB-UniPathway"/>
</dbReference>
<dbReference type="GO" id="GO:0019557">
    <property type="term" value="P:L-histidine catabolic process to glutamate and formate"/>
    <property type="evidence" value="ECO:0007669"/>
    <property type="project" value="UniProtKB-UniPathway"/>
</dbReference>
<dbReference type="CDD" id="cd00332">
    <property type="entry name" value="PAL-HAL"/>
    <property type="match status" value="1"/>
</dbReference>
<dbReference type="FunFam" id="1.10.275.10:FF:000005">
    <property type="entry name" value="Histidine ammonia-lyase"/>
    <property type="match status" value="1"/>
</dbReference>
<dbReference type="FunFam" id="1.20.200.10:FF:000003">
    <property type="entry name" value="Histidine ammonia-lyase"/>
    <property type="match status" value="1"/>
</dbReference>
<dbReference type="Gene3D" id="1.20.200.10">
    <property type="entry name" value="Fumarase/aspartase (Central domain)"/>
    <property type="match status" value="1"/>
</dbReference>
<dbReference type="Gene3D" id="1.10.275.10">
    <property type="entry name" value="Fumarase/aspartase (N-terminal domain)"/>
    <property type="match status" value="1"/>
</dbReference>
<dbReference type="HAMAP" id="MF_00229">
    <property type="entry name" value="His_ammonia_lyase"/>
    <property type="match status" value="1"/>
</dbReference>
<dbReference type="InterPro" id="IPR001106">
    <property type="entry name" value="Aromatic_Lyase"/>
</dbReference>
<dbReference type="InterPro" id="IPR024083">
    <property type="entry name" value="Fumarase/histidase_N"/>
</dbReference>
<dbReference type="InterPro" id="IPR005921">
    <property type="entry name" value="HutH"/>
</dbReference>
<dbReference type="InterPro" id="IPR008948">
    <property type="entry name" value="L-Aspartase-like"/>
</dbReference>
<dbReference type="InterPro" id="IPR022313">
    <property type="entry name" value="Phe/His_NH3-lyase_AS"/>
</dbReference>
<dbReference type="NCBIfam" id="TIGR01225">
    <property type="entry name" value="hutH"/>
    <property type="match status" value="1"/>
</dbReference>
<dbReference type="NCBIfam" id="NF006871">
    <property type="entry name" value="PRK09367.1"/>
    <property type="match status" value="1"/>
</dbReference>
<dbReference type="PANTHER" id="PTHR10362">
    <property type="entry name" value="HISTIDINE AMMONIA-LYASE"/>
    <property type="match status" value="1"/>
</dbReference>
<dbReference type="Pfam" id="PF00221">
    <property type="entry name" value="Lyase_aromatic"/>
    <property type="match status" value="1"/>
</dbReference>
<dbReference type="SUPFAM" id="SSF48557">
    <property type="entry name" value="L-aspartase-like"/>
    <property type="match status" value="1"/>
</dbReference>
<dbReference type="PROSITE" id="PS00488">
    <property type="entry name" value="PAL_HISTIDASE"/>
    <property type="match status" value="1"/>
</dbReference>
<feature type="chain" id="PRO_0000336585" description="Histidine ammonia-lyase">
    <location>
        <begin position="1"/>
        <end position="507"/>
    </location>
</feature>
<feature type="modified residue" description="2,3-didehydroalanine (Ser)" evidence="1">
    <location>
        <position position="143"/>
    </location>
</feature>
<feature type="cross-link" description="5-imidazolinone (Ala-Gly)" evidence="1">
    <location>
        <begin position="142"/>
        <end position="144"/>
    </location>
</feature>
<gene>
    <name evidence="1" type="primary">hutH</name>
    <name type="ordered locus">Mmar10_1603</name>
</gene>
<reference key="1">
    <citation type="submission" date="2006-08" db="EMBL/GenBank/DDBJ databases">
        <title>Complete sequence of Maricaulis maris MCS10.</title>
        <authorList>
            <consortium name="US DOE Joint Genome Institute"/>
            <person name="Copeland A."/>
            <person name="Lucas S."/>
            <person name="Lapidus A."/>
            <person name="Barry K."/>
            <person name="Detter J.C."/>
            <person name="Glavina del Rio T."/>
            <person name="Hammon N."/>
            <person name="Israni S."/>
            <person name="Dalin E."/>
            <person name="Tice H."/>
            <person name="Pitluck S."/>
            <person name="Saunders E."/>
            <person name="Brettin T."/>
            <person name="Bruce D."/>
            <person name="Han C."/>
            <person name="Tapia R."/>
            <person name="Gilna P."/>
            <person name="Schmutz J."/>
            <person name="Larimer F."/>
            <person name="Land M."/>
            <person name="Hauser L."/>
            <person name="Kyrpides N."/>
            <person name="Mikhailova N."/>
            <person name="Viollier P."/>
            <person name="Stephens C."/>
            <person name="Richardson P."/>
        </authorList>
    </citation>
    <scope>NUCLEOTIDE SEQUENCE [LARGE SCALE GENOMIC DNA]</scope>
    <source>
        <strain>MCS10</strain>
    </source>
</reference>